<keyword id="KW-0963">Cytoplasm</keyword>
<keyword id="KW-0489">Methyltransferase</keyword>
<keyword id="KW-1185">Reference proteome</keyword>
<keyword id="KW-0698">rRNA processing</keyword>
<keyword id="KW-0949">S-adenosyl-L-methionine</keyword>
<keyword id="KW-0808">Transferase</keyword>
<comment type="function">
    <text evidence="1">Specifically methylates the N4 position of cytidine in position 1402 (C1402) of 16S rRNA.</text>
</comment>
<comment type="catalytic activity">
    <reaction evidence="1">
        <text>cytidine(1402) in 16S rRNA + S-adenosyl-L-methionine = N(4)-methylcytidine(1402) in 16S rRNA + S-adenosyl-L-homocysteine + H(+)</text>
        <dbReference type="Rhea" id="RHEA:42928"/>
        <dbReference type="Rhea" id="RHEA-COMP:10286"/>
        <dbReference type="Rhea" id="RHEA-COMP:10287"/>
        <dbReference type="ChEBI" id="CHEBI:15378"/>
        <dbReference type="ChEBI" id="CHEBI:57856"/>
        <dbReference type="ChEBI" id="CHEBI:59789"/>
        <dbReference type="ChEBI" id="CHEBI:74506"/>
        <dbReference type="ChEBI" id="CHEBI:82748"/>
        <dbReference type="EC" id="2.1.1.199"/>
    </reaction>
</comment>
<comment type="subcellular location">
    <subcellularLocation>
        <location evidence="1">Cytoplasm</location>
    </subcellularLocation>
</comment>
<comment type="similarity">
    <text evidence="1">Belongs to the methyltransferase superfamily. RsmH family.</text>
</comment>
<protein>
    <recommendedName>
        <fullName evidence="1">Ribosomal RNA small subunit methyltransferase H</fullName>
        <ecNumber evidence="1">2.1.1.199</ecNumber>
    </recommendedName>
    <alternativeName>
        <fullName evidence="1">16S rRNA m(4)C1402 methyltransferase</fullName>
    </alternativeName>
    <alternativeName>
        <fullName evidence="1">rRNA (cytosine-N(4)-)-methyltransferase RsmH</fullName>
    </alternativeName>
</protein>
<sequence length="325" mass="35220">MSPTESPGTTTLRHRTVLLDEAVDALVWRPDGAYVDGTFGRGGHSRAVLARLGPAGTLVAFDKDPAAIAEAGTIKDARFSIEHASFAEMGDRLAGRGPVAGVLLDLGISSPQIDEAARGFSFRFEGPLDMRMDTTRGITAAEWLAQADEQDIARVIRDYGEERFALQIAKAIVARRRESGDGGALATTSDLAALVAKAVKTREKGQDPATRTFQALRIYINQELEDLERGLKAAYELLQVGGRLVVISFHSLEDRIVKRFMQAHARPERDADPALRRAPLRAADLPQPTMKLLGRFKPGAEEVAGNPRARSAVMRVAEKLGEQSA</sequence>
<evidence type="ECO:0000255" key="1">
    <source>
        <dbReference type="HAMAP-Rule" id="MF_01007"/>
    </source>
</evidence>
<name>RSMH_CUPMC</name>
<organism>
    <name type="scientific">Cupriavidus metallidurans (strain ATCC 43123 / DSM 2839 / NBRC 102507 / CH34)</name>
    <name type="common">Ralstonia metallidurans</name>
    <dbReference type="NCBI Taxonomy" id="266264"/>
    <lineage>
        <taxon>Bacteria</taxon>
        <taxon>Pseudomonadati</taxon>
        <taxon>Pseudomonadota</taxon>
        <taxon>Betaproteobacteria</taxon>
        <taxon>Burkholderiales</taxon>
        <taxon>Burkholderiaceae</taxon>
        <taxon>Cupriavidus</taxon>
    </lineage>
</organism>
<feature type="chain" id="PRO_0000387063" description="Ribosomal RNA small subunit methyltransferase H">
    <location>
        <begin position="1"/>
        <end position="325"/>
    </location>
</feature>
<feature type="binding site" evidence="1">
    <location>
        <begin position="42"/>
        <end position="44"/>
    </location>
    <ligand>
        <name>S-adenosyl-L-methionine</name>
        <dbReference type="ChEBI" id="CHEBI:59789"/>
    </ligand>
</feature>
<feature type="binding site" evidence="1">
    <location>
        <position position="62"/>
    </location>
    <ligand>
        <name>S-adenosyl-L-methionine</name>
        <dbReference type="ChEBI" id="CHEBI:59789"/>
    </ligand>
</feature>
<feature type="binding site" evidence="1">
    <location>
        <position position="86"/>
    </location>
    <ligand>
        <name>S-adenosyl-L-methionine</name>
        <dbReference type="ChEBI" id="CHEBI:59789"/>
    </ligand>
</feature>
<feature type="binding site" evidence="1">
    <location>
        <position position="105"/>
    </location>
    <ligand>
        <name>S-adenosyl-L-methionine</name>
        <dbReference type="ChEBI" id="CHEBI:59789"/>
    </ligand>
</feature>
<feature type="binding site" evidence="1">
    <location>
        <position position="112"/>
    </location>
    <ligand>
        <name>S-adenosyl-L-methionine</name>
        <dbReference type="ChEBI" id="CHEBI:59789"/>
    </ligand>
</feature>
<accession>Q1LIL8</accession>
<reference key="1">
    <citation type="journal article" date="2010" name="PLoS ONE">
        <title>The complete genome sequence of Cupriavidus metallidurans strain CH34, a master survivalist in harsh and anthropogenic environments.</title>
        <authorList>
            <person name="Janssen P.J."/>
            <person name="Van Houdt R."/>
            <person name="Moors H."/>
            <person name="Monsieurs P."/>
            <person name="Morin N."/>
            <person name="Michaux A."/>
            <person name="Benotmane M.A."/>
            <person name="Leys N."/>
            <person name="Vallaeys T."/>
            <person name="Lapidus A."/>
            <person name="Monchy S."/>
            <person name="Medigue C."/>
            <person name="Taghavi S."/>
            <person name="McCorkle S."/>
            <person name="Dunn J."/>
            <person name="van der Lelie D."/>
            <person name="Mergeay M."/>
        </authorList>
    </citation>
    <scope>NUCLEOTIDE SEQUENCE [LARGE SCALE GENOMIC DNA]</scope>
    <source>
        <strain>ATCC 43123 / DSM 2839 / NBRC 102507 / CH34</strain>
    </source>
</reference>
<gene>
    <name evidence="1" type="primary">rsmH</name>
    <name type="synonym">mraW</name>
    <name type="ordered locus">Rmet_3136</name>
</gene>
<dbReference type="EC" id="2.1.1.199" evidence="1"/>
<dbReference type="EMBL" id="CP000352">
    <property type="protein sequence ID" value="ABF10008.1"/>
    <property type="molecule type" value="Genomic_DNA"/>
</dbReference>
<dbReference type="RefSeq" id="WP_011517625.1">
    <property type="nucleotide sequence ID" value="NC_007973.1"/>
</dbReference>
<dbReference type="SMR" id="Q1LIL8"/>
<dbReference type="STRING" id="266264.Rmet_3136"/>
<dbReference type="KEGG" id="rme:Rmet_3136"/>
<dbReference type="eggNOG" id="COG0275">
    <property type="taxonomic scope" value="Bacteria"/>
</dbReference>
<dbReference type="HOGENOM" id="CLU_038422_2_0_4"/>
<dbReference type="Proteomes" id="UP000002429">
    <property type="component" value="Chromosome"/>
</dbReference>
<dbReference type="GO" id="GO:0005737">
    <property type="term" value="C:cytoplasm"/>
    <property type="evidence" value="ECO:0007669"/>
    <property type="project" value="UniProtKB-SubCell"/>
</dbReference>
<dbReference type="GO" id="GO:0071424">
    <property type="term" value="F:rRNA (cytosine-N4-)-methyltransferase activity"/>
    <property type="evidence" value="ECO:0007669"/>
    <property type="project" value="UniProtKB-UniRule"/>
</dbReference>
<dbReference type="GO" id="GO:0070475">
    <property type="term" value="P:rRNA base methylation"/>
    <property type="evidence" value="ECO:0007669"/>
    <property type="project" value="UniProtKB-UniRule"/>
</dbReference>
<dbReference type="Gene3D" id="1.10.150.170">
    <property type="entry name" value="Putative methyltransferase TM0872, insert domain"/>
    <property type="match status" value="1"/>
</dbReference>
<dbReference type="Gene3D" id="3.40.50.150">
    <property type="entry name" value="Vaccinia Virus protein VP39"/>
    <property type="match status" value="1"/>
</dbReference>
<dbReference type="HAMAP" id="MF_01007">
    <property type="entry name" value="16SrRNA_methyltr_H"/>
    <property type="match status" value="1"/>
</dbReference>
<dbReference type="InterPro" id="IPR002903">
    <property type="entry name" value="RsmH"/>
</dbReference>
<dbReference type="InterPro" id="IPR023397">
    <property type="entry name" value="SAM-dep_MeTrfase_MraW_recog"/>
</dbReference>
<dbReference type="InterPro" id="IPR029063">
    <property type="entry name" value="SAM-dependent_MTases_sf"/>
</dbReference>
<dbReference type="NCBIfam" id="TIGR00006">
    <property type="entry name" value="16S rRNA (cytosine(1402)-N(4))-methyltransferase RsmH"/>
    <property type="match status" value="1"/>
</dbReference>
<dbReference type="PANTHER" id="PTHR11265:SF0">
    <property type="entry name" value="12S RRNA N4-METHYLCYTIDINE METHYLTRANSFERASE"/>
    <property type="match status" value="1"/>
</dbReference>
<dbReference type="PANTHER" id="PTHR11265">
    <property type="entry name" value="S-ADENOSYL-METHYLTRANSFERASE MRAW"/>
    <property type="match status" value="1"/>
</dbReference>
<dbReference type="Pfam" id="PF01795">
    <property type="entry name" value="Methyltransf_5"/>
    <property type="match status" value="1"/>
</dbReference>
<dbReference type="PIRSF" id="PIRSF004486">
    <property type="entry name" value="MraW"/>
    <property type="match status" value="1"/>
</dbReference>
<dbReference type="SUPFAM" id="SSF81799">
    <property type="entry name" value="Putative methyltransferase TM0872, insert domain"/>
    <property type="match status" value="1"/>
</dbReference>
<dbReference type="SUPFAM" id="SSF53335">
    <property type="entry name" value="S-adenosyl-L-methionine-dependent methyltransferases"/>
    <property type="match status" value="1"/>
</dbReference>
<proteinExistence type="inferred from homology"/>